<name>ACKA2_ALIF1</name>
<keyword id="KW-0067">ATP-binding</keyword>
<keyword id="KW-0963">Cytoplasm</keyword>
<keyword id="KW-0418">Kinase</keyword>
<keyword id="KW-0460">Magnesium</keyword>
<keyword id="KW-0479">Metal-binding</keyword>
<keyword id="KW-0547">Nucleotide-binding</keyword>
<keyword id="KW-1185">Reference proteome</keyword>
<keyword id="KW-0808">Transferase</keyword>
<protein>
    <recommendedName>
        <fullName evidence="1">Acetate kinase 2</fullName>
        <ecNumber evidence="1">2.7.2.1</ecNumber>
    </recommendedName>
    <alternativeName>
        <fullName evidence="1">Acetokinase 2</fullName>
    </alternativeName>
</protein>
<gene>
    <name evidence="1" type="primary">ackA2</name>
    <name type="ordered locus">VF_A0794</name>
</gene>
<dbReference type="EC" id="2.7.2.1" evidence="1"/>
<dbReference type="EMBL" id="CP000021">
    <property type="protein sequence ID" value="AAW87864.1"/>
    <property type="status" value="ALT_INIT"/>
    <property type="molecule type" value="Genomic_DNA"/>
</dbReference>
<dbReference type="RefSeq" id="WP_012534931.1">
    <property type="nucleotide sequence ID" value="NZ_CAWLES010000002.1"/>
</dbReference>
<dbReference type="RefSeq" id="YP_206752.1">
    <property type="nucleotide sequence ID" value="NC_006841.2"/>
</dbReference>
<dbReference type="SMR" id="Q5DZD2"/>
<dbReference type="STRING" id="312309.VF_A0794"/>
<dbReference type="EnsemblBacteria" id="AAW87864">
    <property type="protein sequence ID" value="AAW87864"/>
    <property type="gene ID" value="VF_A0794"/>
</dbReference>
<dbReference type="GeneID" id="54166113"/>
<dbReference type="KEGG" id="vfi:VF_A0794"/>
<dbReference type="PATRIC" id="fig|312309.11.peg.3396"/>
<dbReference type="eggNOG" id="COG0282">
    <property type="taxonomic scope" value="Bacteria"/>
</dbReference>
<dbReference type="HOGENOM" id="CLU_020352_0_1_6"/>
<dbReference type="OrthoDB" id="9802453at2"/>
<dbReference type="UniPathway" id="UPA00340">
    <property type="reaction ID" value="UER00458"/>
</dbReference>
<dbReference type="Proteomes" id="UP000000537">
    <property type="component" value="Chromosome II"/>
</dbReference>
<dbReference type="GO" id="GO:0005829">
    <property type="term" value="C:cytosol"/>
    <property type="evidence" value="ECO:0007669"/>
    <property type="project" value="TreeGrafter"/>
</dbReference>
<dbReference type="GO" id="GO:0008776">
    <property type="term" value="F:acetate kinase activity"/>
    <property type="evidence" value="ECO:0007669"/>
    <property type="project" value="UniProtKB-UniRule"/>
</dbReference>
<dbReference type="GO" id="GO:0005524">
    <property type="term" value="F:ATP binding"/>
    <property type="evidence" value="ECO:0007669"/>
    <property type="project" value="UniProtKB-KW"/>
</dbReference>
<dbReference type="GO" id="GO:0000287">
    <property type="term" value="F:magnesium ion binding"/>
    <property type="evidence" value="ECO:0007669"/>
    <property type="project" value="UniProtKB-UniRule"/>
</dbReference>
<dbReference type="GO" id="GO:0006083">
    <property type="term" value="P:acetate metabolic process"/>
    <property type="evidence" value="ECO:0007669"/>
    <property type="project" value="TreeGrafter"/>
</dbReference>
<dbReference type="GO" id="GO:0006085">
    <property type="term" value="P:acetyl-CoA biosynthetic process"/>
    <property type="evidence" value="ECO:0007669"/>
    <property type="project" value="UniProtKB-UniRule"/>
</dbReference>
<dbReference type="CDD" id="cd24010">
    <property type="entry name" value="ASKHA_NBD_AcK_PK"/>
    <property type="match status" value="1"/>
</dbReference>
<dbReference type="Gene3D" id="3.30.420.40">
    <property type="match status" value="2"/>
</dbReference>
<dbReference type="HAMAP" id="MF_00020">
    <property type="entry name" value="Acetate_kinase"/>
    <property type="match status" value="1"/>
</dbReference>
<dbReference type="InterPro" id="IPR004372">
    <property type="entry name" value="Ac/propionate_kinase"/>
</dbReference>
<dbReference type="InterPro" id="IPR000890">
    <property type="entry name" value="Aliphatic_acid_kin_short-chain"/>
</dbReference>
<dbReference type="InterPro" id="IPR023865">
    <property type="entry name" value="Aliphatic_acid_kinase_CS"/>
</dbReference>
<dbReference type="InterPro" id="IPR043129">
    <property type="entry name" value="ATPase_NBD"/>
</dbReference>
<dbReference type="NCBIfam" id="TIGR00016">
    <property type="entry name" value="ackA"/>
    <property type="match status" value="1"/>
</dbReference>
<dbReference type="NCBIfam" id="NF009099">
    <property type="entry name" value="PRK12440.1"/>
    <property type="match status" value="1"/>
</dbReference>
<dbReference type="PANTHER" id="PTHR21060">
    <property type="entry name" value="ACETATE KINASE"/>
    <property type="match status" value="1"/>
</dbReference>
<dbReference type="PANTHER" id="PTHR21060:SF21">
    <property type="entry name" value="ACETATE KINASE"/>
    <property type="match status" value="1"/>
</dbReference>
<dbReference type="Pfam" id="PF00871">
    <property type="entry name" value="Acetate_kinase"/>
    <property type="match status" value="1"/>
</dbReference>
<dbReference type="PIRSF" id="PIRSF000722">
    <property type="entry name" value="Acetate_prop_kin"/>
    <property type="match status" value="1"/>
</dbReference>
<dbReference type="PRINTS" id="PR00471">
    <property type="entry name" value="ACETATEKNASE"/>
</dbReference>
<dbReference type="SUPFAM" id="SSF53067">
    <property type="entry name" value="Actin-like ATPase domain"/>
    <property type="match status" value="2"/>
</dbReference>
<dbReference type="PROSITE" id="PS01075">
    <property type="entry name" value="ACETATE_KINASE_1"/>
    <property type="match status" value="1"/>
</dbReference>
<dbReference type="PROSITE" id="PS01076">
    <property type="entry name" value="ACETATE_KINASE_2"/>
    <property type="match status" value="1"/>
</dbReference>
<sequence>MNNEYVLVINSGSSSLKFAVIDSVSGDAVLSGLGECFGLEDARMSWKYQGQKTEIAIEGNENHHKIAIGKLVGLTEELGFTDGIVAIGHRIVHGGEKFTKTVRINEEVTKEIESLSDLAPLHNPAGAIGIRAAVEAFPSLPQFAVFDTAFHQTMPKRAYTGAIAKELYTDFGVRRYGFHGTSHYFVSREAAKMINKPIEESNFISVHLGNGASVCAIKDGNSVDTSMGFTPLSGLMMGTRCGDLDPGIIEYLLKKGWSQEQVFNSLNKESGFLGVSGLTSDARGILEAMEEGHEGATLAFQVFTYRVAKYVASYLAALDSLDGIIFTGGIGENSLPIRREILSNLKILGFVEDVAGNEGARFGADGIIAKSEMLNAVAMVIPTNEEFVIAQQSVELL</sequence>
<accession>Q5DZD2</accession>
<proteinExistence type="inferred from homology"/>
<evidence type="ECO:0000255" key="1">
    <source>
        <dbReference type="HAMAP-Rule" id="MF_00020"/>
    </source>
</evidence>
<evidence type="ECO:0000305" key="2"/>
<comment type="function">
    <text evidence="1">Catalyzes the formation of acetyl phosphate from acetate and ATP. Can also catalyze the reverse reaction.</text>
</comment>
<comment type="catalytic activity">
    <reaction evidence="1">
        <text>acetate + ATP = acetyl phosphate + ADP</text>
        <dbReference type="Rhea" id="RHEA:11352"/>
        <dbReference type="ChEBI" id="CHEBI:22191"/>
        <dbReference type="ChEBI" id="CHEBI:30089"/>
        <dbReference type="ChEBI" id="CHEBI:30616"/>
        <dbReference type="ChEBI" id="CHEBI:456216"/>
        <dbReference type="EC" id="2.7.2.1"/>
    </reaction>
</comment>
<comment type="cofactor">
    <cofactor evidence="1">
        <name>Mg(2+)</name>
        <dbReference type="ChEBI" id="CHEBI:18420"/>
    </cofactor>
    <cofactor evidence="1">
        <name>Mn(2+)</name>
        <dbReference type="ChEBI" id="CHEBI:29035"/>
    </cofactor>
    <text evidence="1">Mg(2+). Can also accept Mn(2+).</text>
</comment>
<comment type="pathway">
    <text evidence="1">Metabolic intermediate biosynthesis; acetyl-CoA biosynthesis; acetyl-CoA from acetate: step 1/2.</text>
</comment>
<comment type="subunit">
    <text evidence="1">Homodimer.</text>
</comment>
<comment type="subcellular location">
    <subcellularLocation>
        <location evidence="1">Cytoplasm</location>
    </subcellularLocation>
</comment>
<comment type="similarity">
    <text evidence="1">Belongs to the acetokinase family.</text>
</comment>
<comment type="sequence caution" evidence="2">
    <conflict type="erroneous initiation">
        <sequence resource="EMBL-CDS" id="AAW87864"/>
    </conflict>
</comment>
<reference key="1">
    <citation type="journal article" date="2005" name="Proc. Natl. Acad. Sci. U.S.A.">
        <title>Complete genome sequence of Vibrio fischeri: a symbiotic bacterium with pathogenic congeners.</title>
        <authorList>
            <person name="Ruby E.G."/>
            <person name="Urbanowski M."/>
            <person name="Campbell J."/>
            <person name="Dunn A."/>
            <person name="Faini M."/>
            <person name="Gunsalus R."/>
            <person name="Lostroh P."/>
            <person name="Lupp C."/>
            <person name="McCann J."/>
            <person name="Millikan D."/>
            <person name="Schaefer A."/>
            <person name="Stabb E."/>
            <person name="Stevens A."/>
            <person name="Visick K."/>
            <person name="Whistler C."/>
            <person name="Greenberg E.P."/>
        </authorList>
    </citation>
    <scope>NUCLEOTIDE SEQUENCE [LARGE SCALE GENOMIC DNA]</scope>
    <source>
        <strain>ATCC 700601 / ES114</strain>
    </source>
</reference>
<feature type="chain" id="PRO_0000107638" description="Acetate kinase 2">
    <location>
        <begin position="1"/>
        <end position="397"/>
    </location>
</feature>
<feature type="active site" description="Proton donor/acceptor" evidence="1">
    <location>
        <position position="147"/>
    </location>
</feature>
<feature type="binding site" evidence="1">
    <location>
        <position position="10"/>
    </location>
    <ligand>
        <name>Mg(2+)</name>
        <dbReference type="ChEBI" id="CHEBI:18420"/>
    </ligand>
</feature>
<feature type="binding site" evidence="1">
    <location>
        <position position="17"/>
    </location>
    <ligand>
        <name>ATP</name>
        <dbReference type="ChEBI" id="CHEBI:30616"/>
    </ligand>
</feature>
<feature type="binding site" evidence="1">
    <location>
        <position position="90"/>
    </location>
    <ligand>
        <name>substrate</name>
    </ligand>
</feature>
<feature type="binding site" evidence="1">
    <location>
        <begin position="207"/>
        <end position="211"/>
    </location>
    <ligand>
        <name>ATP</name>
        <dbReference type="ChEBI" id="CHEBI:30616"/>
    </ligand>
</feature>
<feature type="binding site" evidence="1">
    <location>
        <begin position="281"/>
        <end position="283"/>
    </location>
    <ligand>
        <name>ATP</name>
        <dbReference type="ChEBI" id="CHEBI:30616"/>
    </ligand>
</feature>
<feature type="binding site" evidence="1">
    <location>
        <begin position="329"/>
        <end position="333"/>
    </location>
    <ligand>
        <name>ATP</name>
        <dbReference type="ChEBI" id="CHEBI:30616"/>
    </ligand>
</feature>
<feature type="binding site" evidence="1">
    <location>
        <position position="385"/>
    </location>
    <ligand>
        <name>Mg(2+)</name>
        <dbReference type="ChEBI" id="CHEBI:18420"/>
    </ligand>
</feature>
<feature type="site" description="Transition state stabilizer" evidence="1">
    <location>
        <position position="179"/>
    </location>
</feature>
<feature type="site" description="Transition state stabilizer" evidence="1">
    <location>
        <position position="240"/>
    </location>
</feature>
<organism>
    <name type="scientific">Aliivibrio fischeri (strain ATCC 700601 / ES114)</name>
    <name type="common">Vibrio fischeri</name>
    <dbReference type="NCBI Taxonomy" id="312309"/>
    <lineage>
        <taxon>Bacteria</taxon>
        <taxon>Pseudomonadati</taxon>
        <taxon>Pseudomonadota</taxon>
        <taxon>Gammaproteobacteria</taxon>
        <taxon>Vibrionales</taxon>
        <taxon>Vibrionaceae</taxon>
        <taxon>Aliivibrio</taxon>
    </lineage>
</organism>